<gene>
    <name evidence="1" type="primary">fabZ</name>
    <name type="ordered locus">VV1_1871</name>
</gene>
<protein>
    <recommendedName>
        <fullName evidence="1">3-hydroxyacyl-[acyl-carrier-protein] dehydratase FabZ</fullName>
        <ecNumber evidence="1">4.2.1.59</ecNumber>
    </recommendedName>
    <alternativeName>
        <fullName evidence="1">(3R)-hydroxymyristoyl-[acyl-carrier-protein] dehydratase</fullName>
        <shortName evidence="1">(3R)-hydroxymyristoyl-ACP dehydrase</shortName>
    </alternativeName>
    <alternativeName>
        <fullName evidence="1">Beta-hydroxyacyl-ACP dehydratase</fullName>
    </alternativeName>
</protein>
<sequence>MTTEKKTMNISEIQELLPHRYPFLLIDRVVDFQEEKYLHAIKNVSVNEPQFTGHFPQLPVFPGVLILEAMAQATGLLAFKSFGAPSENELYYFASVDGAKFRKPVVPGDQLIIEVEFIKERRGIAAFTGVAKVDGDVVCSAELKCARREF</sequence>
<reference key="1">
    <citation type="submission" date="2002-12" db="EMBL/GenBank/DDBJ databases">
        <title>Complete genome sequence of Vibrio vulnificus CMCP6.</title>
        <authorList>
            <person name="Rhee J.H."/>
            <person name="Kim S.Y."/>
            <person name="Chung S.S."/>
            <person name="Kim J.J."/>
            <person name="Moon Y.H."/>
            <person name="Jeong H."/>
            <person name="Choy H.E."/>
        </authorList>
    </citation>
    <scope>NUCLEOTIDE SEQUENCE [LARGE SCALE GENOMIC DNA]</scope>
    <source>
        <strain>CMCP6</strain>
    </source>
</reference>
<organism>
    <name type="scientific">Vibrio vulnificus (strain CMCP6)</name>
    <dbReference type="NCBI Taxonomy" id="216895"/>
    <lineage>
        <taxon>Bacteria</taxon>
        <taxon>Pseudomonadati</taxon>
        <taxon>Pseudomonadota</taxon>
        <taxon>Gammaproteobacteria</taxon>
        <taxon>Vibrionales</taxon>
        <taxon>Vibrionaceae</taxon>
        <taxon>Vibrio</taxon>
    </lineage>
</organism>
<proteinExistence type="inferred from homology"/>
<feature type="chain" id="PRO_0000091759" description="3-hydroxyacyl-[acyl-carrier-protein] dehydratase FabZ">
    <location>
        <begin position="1"/>
        <end position="150"/>
    </location>
</feature>
<feature type="active site" evidence="1">
    <location>
        <position position="54"/>
    </location>
</feature>
<accession>Q8DBF0</accession>
<name>FABZ_VIBVU</name>
<comment type="function">
    <text evidence="1">Involved in unsaturated fatty acids biosynthesis. Catalyzes the dehydration of short chain beta-hydroxyacyl-ACPs and long chain saturated and unsaturated beta-hydroxyacyl-ACPs.</text>
</comment>
<comment type="catalytic activity">
    <reaction evidence="1">
        <text>a (3R)-hydroxyacyl-[ACP] = a (2E)-enoyl-[ACP] + H2O</text>
        <dbReference type="Rhea" id="RHEA:13097"/>
        <dbReference type="Rhea" id="RHEA-COMP:9925"/>
        <dbReference type="Rhea" id="RHEA-COMP:9945"/>
        <dbReference type="ChEBI" id="CHEBI:15377"/>
        <dbReference type="ChEBI" id="CHEBI:78784"/>
        <dbReference type="ChEBI" id="CHEBI:78827"/>
        <dbReference type="EC" id="4.2.1.59"/>
    </reaction>
</comment>
<comment type="subcellular location">
    <subcellularLocation>
        <location evidence="1">Cytoplasm</location>
    </subcellularLocation>
</comment>
<comment type="similarity">
    <text evidence="1">Belongs to the thioester dehydratase family. FabZ subfamily.</text>
</comment>
<dbReference type="EC" id="4.2.1.59" evidence="1"/>
<dbReference type="EMBL" id="AE016795">
    <property type="protein sequence ID" value="AAO10273.2"/>
    <property type="molecule type" value="Genomic_DNA"/>
</dbReference>
<dbReference type="RefSeq" id="WP_011079773.1">
    <property type="nucleotide sequence ID" value="NC_004459.3"/>
</dbReference>
<dbReference type="SMR" id="Q8DBF0"/>
<dbReference type="GeneID" id="93896098"/>
<dbReference type="KEGG" id="vvu:VV1_1871"/>
<dbReference type="HOGENOM" id="CLU_078912_1_0_6"/>
<dbReference type="Proteomes" id="UP000002275">
    <property type="component" value="Chromosome 1"/>
</dbReference>
<dbReference type="GO" id="GO:0005737">
    <property type="term" value="C:cytoplasm"/>
    <property type="evidence" value="ECO:0007669"/>
    <property type="project" value="UniProtKB-SubCell"/>
</dbReference>
<dbReference type="GO" id="GO:0016020">
    <property type="term" value="C:membrane"/>
    <property type="evidence" value="ECO:0007669"/>
    <property type="project" value="GOC"/>
</dbReference>
<dbReference type="GO" id="GO:0019171">
    <property type="term" value="F:(3R)-hydroxyacyl-[acyl-carrier-protein] dehydratase activity"/>
    <property type="evidence" value="ECO:0007669"/>
    <property type="project" value="UniProtKB-EC"/>
</dbReference>
<dbReference type="GO" id="GO:0006633">
    <property type="term" value="P:fatty acid biosynthetic process"/>
    <property type="evidence" value="ECO:0007669"/>
    <property type="project" value="UniProtKB-UniRule"/>
</dbReference>
<dbReference type="GO" id="GO:0009245">
    <property type="term" value="P:lipid A biosynthetic process"/>
    <property type="evidence" value="ECO:0007669"/>
    <property type="project" value="UniProtKB-UniRule"/>
</dbReference>
<dbReference type="CDD" id="cd01288">
    <property type="entry name" value="FabZ"/>
    <property type="match status" value="1"/>
</dbReference>
<dbReference type="FunFam" id="3.10.129.10:FF:000001">
    <property type="entry name" value="3-hydroxyacyl-[acyl-carrier-protein] dehydratase FabZ"/>
    <property type="match status" value="1"/>
</dbReference>
<dbReference type="Gene3D" id="3.10.129.10">
    <property type="entry name" value="Hotdog Thioesterase"/>
    <property type="match status" value="1"/>
</dbReference>
<dbReference type="HAMAP" id="MF_00406">
    <property type="entry name" value="FabZ"/>
    <property type="match status" value="1"/>
</dbReference>
<dbReference type="InterPro" id="IPR013114">
    <property type="entry name" value="FabA_FabZ"/>
</dbReference>
<dbReference type="InterPro" id="IPR010084">
    <property type="entry name" value="FabZ"/>
</dbReference>
<dbReference type="InterPro" id="IPR029069">
    <property type="entry name" value="HotDog_dom_sf"/>
</dbReference>
<dbReference type="NCBIfam" id="TIGR01750">
    <property type="entry name" value="fabZ"/>
    <property type="match status" value="1"/>
</dbReference>
<dbReference type="NCBIfam" id="NF000582">
    <property type="entry name" value="PRK00006.1"/>
    <property type="match status" value="1"/>
</dbReference>
<dbReference type="PANTHER" id="PTHR30272">
    <property type="entry name" value="3-HYDROXYACYL-[ACYL-CARRIER-PROTEIN] DEHYDRATASE"/>
    <property type="match status" value="1"/>
</dbReference>
<dbReference type="PANTHER" id="PTHR30272:SF1">
    <property type="entry name" value="3-HYDROXYACYL-[ACYL-CARRIER-PROTEIN] DEHYDRATASE"/>
    <property type="match status" value="1"/>
</dbReference>
<dbReference type="Pfam" id="PF07977">
    <property type="entry name" value="FabA"/>
    <property type="match status" value="1"/>
</dbReference>
<dbReference type="SUPFAM" id="SSF54637">
    <property type="entry name" value="Thioesterase/thiol ester dehydrase-isomerase"/>
    <property type="match status" value="1"/>
</dbReference>
<keyword id="KW-0963">Cytoplasm</keyword>
<keyword id="KW-0441">Lipid A biosynthesis</keyword>
<keyword id="KW-0444">Lipid biosynthesis</keyword>
<keyword id="KW-0443">Lipid metabolism</keyword>
<keyword id="KW-0456">Lyase</keyword>
<evidence type="ECO:0000255" key="1">
    <source>
        <dbReference type="HAMAP-Rule" id="MF_00406"/>
    </source>
</evidence>